<keyword id="KW-1185">Reference proteome</keyword>
<keyword id="KW-0687">Ribonucleoprotein</keyword>
<keyword id="KW-0689">Ribosomal protein</keyword>
<sequence length="60" mass="6660">MAVISNKNSKSHKRNRRGHIALEVPNIVLDKTTGEYTVAHHVSPKGLYKGRQVVAAPKQK</sequence>
<comment type="similarity">
    <text evidence="1">Belongs to the bacterial ribosomal protein bL32 family.</text>
</comment>
<gene>
    <name evidence="1" type="primary">rpmF</name>
    <name type="ordered locus">OEOE_0770</name>
</gene>
<reference key="1">
    <citation type="journal article" date="2006" name="Proc. Natl. Acad. Sci. U.S.A.">
        <title>Comparative genomics of the lactic acid bacteria.</title>
        <authorList>
            <person name="Makarova K.S."/>
            <person name="Slesarev A."/>
            <person name="Wolf Y.I."/>
            <person name="Sorokin A."/>
            <person name="Mirkin B."/>
            <person name="Koonin E.V."/>
            <person name="Pavlov A."/>
            <person name="Pavlova N."/>
            <person name="Karamychev V."/>
            <person name="Polouchine N."/>
            <person name="Shakhova V."/>
            <person name="Grigoriev I."/>
            <person name="Lou Y."/>
            <person name="Rohksar D."/>
            <person name="Lucas S."/>
            <person name="Huang K."/>
            <person name="Goodstein D.M."/>
            <person name="Hawkins T."/>
            <person name="Plengvidhya V."/>
            <person name="Welker D."/>
            <person name="Hughes J."/>
            <person name="Goh Y."/>
            <person name="Benson A."/>
            <person name="Baldwin K."/>
            <person name="Lee J.-H."/>
            <person name="Diaz-Muniz I."/>
            <person name="Dosti B."/>
            <person name="Smeianov V."/>
            <person name="Wechter W."/>
            <person name="Barabote R."/>
            <person name="Lorca G."/>
            <person name="Altermann E."/>
            <person name="Barrangou R."/>
            <person name="Ganesan B."/>
            <person name="Xie Y."/>
            <person name="Rawsthorne H."/>
            <person name="Tamir D."/>
            <person name="Parker C."/>
            <person name="Breidt F."/>
            <person name="Broadbent J.R."/>
            <person name="Hutkins R."/>
            <person name="O'Sullivan D."/>
            <person name="Steele J."/>
            <person name="Unlu G."/>
            <person name="Saier M.H. Jr."/>
            <person name="Klaenhammer T."/>
            <person name="Richardson P."/>
            <person name="Kozyavkin S."/>
            <person name="Weimer B.C."/>
            <person name="Mills D.A."/>
        </authorList>
    </citation>
    <scope>NUCLEOTIDE SEQUENCE [LARGE SCALE GENOMIC DNA]</scope>
    <source>
        <strain>ATCC BAA-331 / PSU-1</strain>
    </source>
</reference>
<feature type="chain" id="PRO_0000296519" description="Large ribosomal subunit protein bL32">
    <location>
        <begin position="1"/>
        <end position="60"/>
    </location>
</feature>
<evidence type="ECO:0000255" key="1">
    <source>
        <dbReference type="HAMAP-Rule" id="MF_00340"/>
    </source>
</evidence>
<evidence type="ECO:0000305" key="2"/>
<name>RL32_OENOB</name>
<protein>
    <recommendedName>
        <fullName evidence="1">Large ribosomal subunit protein bL32</fullName>
    </recommendedName>
    <alternativeName>
        <fullName evidence="2">50S ribosomal protein L32</fullName>
    </alternativeName>
</protein>
<proteinExistence type="inferred from homology"/>
<dbReference type="EMBL" id="CP000411">
    <property type="protein sequence ID" value="ABJ56697.1"/>
    <property type="molecule type" value="Genomic_DNA"/>
</dbReference>
<dbReference type="RefSeq" id="WP_002817356.1">
    <property type="nucleotide sequence ID" value="NC_008528.1"/>
</dbReference>
<dbReference type="SMR" id="Q04FS5"/>
<dbReference type="STRING" id="203123.OEOE_0770"/>
<dbReference type="GeneID" id="75066155"/>
<dbReference type="KEGG" id="ooe:OEOE_0770"/>
<dbReference type="eggNOG" id="COG0333">
    <property type="taxonomic scope" value="Bacteria"/>
</dbReference>
<dbReference type="HOGENOM" id="CLU_129084_2_0_9"/>
<dbReference type="Proteomes" id="UP000000774">
    <property type="component" value="Chromosome"/>
</dbReference>
<dbReference type="GO" id="GO:0015934">
    <property type="term" value="C:large ribosomal subunit"/>
    <property type="evidence" value="ECO:0007669"/>
    <property type="project" value="InterPro"/>
</dbReference>
<dbReference type="GO" id="GO:0003735">
    <property type="term" value="F:structural constituent of ribosome"/>
    <property type="evidence" value="ECO:0007669"/>
    <property type="project" value="InterPro"/>
</dbReference>
<dbReference type="GO" id="GO:0006412">
    <property type="term" value="P:translation"/>
    <property type="evidence" value="ECO:0007669"/>
    <property type="project" value="UniProtKB-UniRule"/>
</dbReference>
<dbReference type="HAMAP" id="MF_00340">
    <property type="entry name" value="Ribosomal_bL32"/>
    <property type="match status" value="1"/>
</dbReference>
<dbReference type="InterPro" id="IPR002677">
    <property type="entry name" value="Ribosomal_bL32"/>
</dbReference>
<dbReference type="InterPro" id="IPR044957">
    <property type="entry name" value="Ribosomal_bL32_bact"/>
</dbReference>
<dbReference type="InterPro" id="IPR011332">
    <property type="entry name" value="Ribosomal_zn-bd"/>
</dbReference>
<dbReference type="NCBIfam" id="TIGR01031">
    <property type="entry name" value="rpmF_bact"/>
    <property type="match status" value="1"/>
</dbReference>
<dbReference type="PANTHER" id="PTHR35534">
    <property type="entry name" value="50S RIBOSOMAL PROTEIN L32"/>
    <property type="match status" value="1"/>
</dbReference>
<dbReference type="PANTHER" id="PTHR35534:SF1">
    <property type="entry name" value="LARGE RIBOSOMAL SUBUNIT PROTEIN BL32"/>
    <property type="match status" value="1"/>
</dbReference>
<dbReference type="Pfam" id="PF01783">
    <property type="entry name" value="Ribosomal_L32p"/>
    <property type="match status" value="1"/>
</dbReference>
<dbReference type="SUPFAM" id="SSF57829">
    <property type="entry name" value="Zn-binding ribosomal proteins"/>
    <property type="match status" value="1"/>
</dbReference>
<accession>Q04FS5</accession>
<organism>
    <name type="scientific">Oenococcus oeni (strain ATCC BAA-331 / PSU-1)</name>
    <dbReference type="NCBI Taxonomy" id="203123"/>
    <lineage>
        <taxon>Bacteria</taxon>
        <taxon>Bacillati</taxon>
        <taxon>Bacillota</taxon>
        <taxon>Bacilli</taxon>
        <taxon>Lactobacillales</taxon>
        <taxon>Lactobacillaceae</taxon>
        <taxon>Oenococcus</taxon>
    </lineage>
</organism>